<dbReference type="EC" id="2.7.11.1" evidence="2"/>
<dbReference type="EMBL" id="AK140431">
    <property type="protein sequence ID" value="BAE24384.1"/>
    <property type="molecule type" value="mRNA"/>
</dbReference>
<dbReference type="EMBL" id="AC122345">
    <property type="status" value="NOT_ANNOTATED_CDS"/>
    <property type="molecule type" value="Genomic_DNA"/>
</dbReference>
<dbReference type="EMBL" id="AC163109">
    <property type="status" value="NOT_ANNOTATED_CDS"/>
    <property type="molecule type" value="Genomic_DNA"/>
</dbReference>
<dbReference type="EMBL" id="M64429">
    <property type="protein sequence ID" value="AAA37320.1"/>
    <property type="status" value="ALT_SEQ"/>
    <property type="molecule type" value="mRNA"/>
</dbReference>
<dbReference type="CCDS" id="CCDS39463.1">
    <molecule id="P28028-1"/>
</dbReference>
<dbReference type="PIR" id="A40951">
    <property type="entry name" value="TVMSBF"/>
</dbReference>
<dbReference type="RefSeq" id="NP_647455.3">
    <molecule id="P28028-1"/>
    <property type="nucleotide sequence ID" value="NM_139294.5"/>
</dbReference>
<dbReference type="BMRB" id="P28028"/>
<dbReference type="SMR" id="P28028"/>
<dbReference type="BioGRID" id="225124">
    <property type="interactions" value="78"/>
</dbReference>
<dbReference type="CORUM" id="P28028"/>
<dbReference type="DIP" id="DIP-57050N"/>
<dbReference type="FunCoup" id="P28028">
    <property type="interactions" value="4923"/>
</dbReference>
<dbReference type="IntAct" id="P28028">
    <property type="interactions" value="10"/>
</dbReference>
<dbReference type="MINT" id="P28028"/>
<dbReference type="STRING" id="10090.ENSMUSP00000002487"/>
<dbReference type="BindingDB" id="P28028"/>
<dbReference type="ChEMBL" id="CHEMBL2331061"/>
<dbReference type="DrugCentral" id="P28028"/>
<dbReference type="GlyGen" id="P28028">
    <property type="glycosylation" value="2 sites, 1 O-linked glycan (1 site)"/>
</dbReference>
<dbReference type="iPTMnet" id="P28028"/>
<dbReference type="PhosphoSitePlus" id="P28028"/>
<dbReference type="SwissPalm" id="P28028"/>
<dbReference type="jPOST" id="P28028"/>
<dbReference type="PaxDb" id="10090-ENSMUSP00000002487"/>
<dbReference type="PeptideAtlas" id="P28028"/>
<dbReference type="ProteomicsDB" id="273625">
    <molecule id="P28028-3"/>
</dbReference>
<dbReference type="ProteomicsDB" id="320910"/>
<dbReference type="Pumba" id="P28028"/>
<dbReference type="Antibodypedia" id="751">
    <property type="antibodies" value="2314 antibodies from 53 providers"/>
</dbReference>
<dbReference type="DNASU" id="109880"/>
<dbReference type="Ensembl" id="ENSMUST00000002487.15">
    <molecule id="P28028-1"/>
    <property type="protein sequence ID" value="ENSMUSP00000002487.9"/>
    <property type="gene ID" value="ENSMUSG00000002413.16"/>
</dbReference>
<dbReference type="GeneID" id="109880"/>
<dbReference type="KEGG" id="mmu:109880"/>
<dbReference type="UCSC" id="uc009bme.2">
    <molecule id="P28028-3"/>
    <property type="organism name" value="mouse"/>
</dbReference>
<dbReference type="UCSC" id="uc009bmg.1">
    <property type="organism name" value="mouse"/>
</dbReference>
<dbReference type="AGR" id="MGI:88190"/>
<dbReference type="CTD" id="673"/>
<dbReference type="MGI" id="MGI:88190">
    <property type="gene designation" value="Braf"/>
</dbReference>
<dbReference type="VEuPathDB" id="HostDB:ENSMUSG00000002413"/>
<dbReference type="eggNOG" id="KOG0193">
    <property type="taxonomic scope" value="Eukaryota"/>
</dbReference>
<dbReference type="GeneTree" id="ENSGT00940000156154"/>
<dbReference type="HOGENOM" id="CLU_023684_1_0_1"/>
<dbReference type="InParanoid" id="P28028"/>
<dbReference type="OMA" id="MYLMEYQ"/>
<dbReference type="PhylomeDB" id="P28028"/>
<dbReference type="TreeFam" id="TF317006"/>
<dbReference type="Reactome" id="R-MMU-1295596">
    <property type="pathway name" value="Spry regulation of FGF signaling"/>
</dbReference>
<dbReference type="Reactome" id="R-MMU-170968">
    <property type="pathway name" value="Frs2-mediated activation"/>
</dbReference>
<dbReference type="Reactome" id="R-MMU-5673000">
    <property type="pathway name" value="RAF activation"/>
</dbReference>
<dbReference type="Reactome" id="R-MMU-5674135">
    <property type="pathway name" value="MAP2K and MAPK activation"/>
</dbReference>
<dbReference type="Reactome" id="R-MMU-5674499">
    <property type="pathway name" value="Negative feedback regulation of MAPK pathway"/>
</dbReference>
<dbReference type="Reactome" id="R-MMU-5675221">
    <property type="pathway name" value="Negative regulation of MAPK pathway"/>
</dbReference>
<dbReference type="BioGRID-ORCS" id="109880">
    <property type="hits" value="2 hits in 81 CRISPR screens"/>
</dbReference>
<dbReference type="ChiTaRS" id="Braf">
    <property type="organism name" value="mouse"/>
</dbReference>
<dbReference type="PRO" id="PR:P28028"/>
<dbReference type="Proteomes" id="UP000000589">
    <property type="component" value="Chromosome 6"/>
</dbReference>
<dbReference type="RNAct" id="P28028">
    <property type="molecule type" value="protein"/>
</dbReference>
<dbReference type="Bgee" id="ENSMUSG00000002413">
    <property type="expression patterns" value="Expressed in embryonic post-anal tail and 223 other cell types or tissues"/>
</dbReference>
<dbReference type="ExpressionAtlas" id="P28028">
    <property type="expression patterns" value="baseline and differential"/>
</dbReference>
<dbReference type="GO" id="GO:0044297">
    <property type="term" value="C:cell body"/>
    <property type="evidence" value="ECO:0000314"/>
    <property type="project" value="MGI"/>
</dbReference>
<dbReference type="GO" id="GO:0034451">
    <property type="term" value="C:centriolar satellite"/>
    <property type="evidence" value="ECO:0007669"/>
    <property type="project" value="Ensembl"/>
</dbReference>
<dbReference type="GO" id="GO:0036064">
    <property type="term" value="C:ciliary basal body"/>
    <property type="evidence" value="ECO:0007669"/>
    <property type="project" value="Ensembl"/>
</dbReference>
<dbReference type="GO" id="GO:0005737">
    <property type="term" value="C:cytoplasm"/>
    <property type="evidence" value="ECO:0000314"/>
    <property type="project" value="MGI"/>
</dbReference>
<dbReference type="GO" id="GO:0005829">
    <property type="term" value="C:cytosol"/>
    <property type="evidence" value="ECO:0007669"/>
    <property type="project" value="Ensembl"/>
</dbReference>
<dbReference type="GO" id="GO:0098978">
    <property type="term" value="C:glutamatergic synapse"/>
    <property type="evidence" value="ECO:0000314"/>
    <property type="project" value="SynGO"/>
</dbReference>
<dbReference type="GO" id="GO:0005739">
    <property type="term" value="C:mitochondrion"/>
    <property type="evidence" value="ECO:0000314"/>
    <property type="project" value="MGI"/>
</dbReference>
<dbReference type="GO" id="GO:0043005">
    <property type="term" value="C:neuron projection"/>
    <property type="evidence" value="ECO:0000314"/>
    <property type="project" value="MGI"/>
</dbReference>
<dbReference type="GO" id="GO:0005634">
    <property type="term" value="C:nucleus"/>
    <property type="evidence" value="ECO:0007669"/>
    <property type="project" value="UniProtKB-SubCell"/>
</dbReference>
<dbReference type="GO" id="GO:0005886">
    <property type="term" value="C:plasma membrane"/>
    <property type="evidence" value="ECO:0000314"/>
    <property type="project" value="MGI"/>
</dbReference>
<dbReference type="GO" id="GO:0098794">
    <property type="term" value="C:postsynapse"/>
    <property type="evidence" value="ECO:0007669"/>
    <property type="project" value="GOC"/>
</dbReference>
<dbReference type="GO" id="GO:0098793">
    <property type="term" value="C:presynapse"/>
    <property type="evidence" value="ECO:0007669"/>
    <property type="project" value="GOC"/>
</dbReference>
<dbReference type="GO" id="GO:0005524">
    <property type="term" value="F:ATP binding"/>
    <property type="evidence" value="ECO:0007669"/>
    <property type="project" value="UniProtKB-KW"/>
</dbReference>
<dbReference type="GO" id="GO:0005509">
    <property type="term" value="F:calcium ion binding"/>
    <property type="evidence" value="ECO:0007669"/>
    <property type="project" value="Ensembl"/>
</dbReference>
<dbReference type="GO" id="GO:0042802">
    <property type="term" value="F:identical protein binding"/>
    <property type="evidence" value="ECO:0007669"/>
    <property type="project" value="Ensembl"/>
</dbReference>
<dbReference type="GO" id="GO:0004708">
    <property type="term" value="F:MAP kinase kinase activity"/>
    <property type="evidence" value="ECO:0007669"/>
    <property type="project" value="Ensembl"/>
</dbReference>
<dbReference type="GO" id="GO:0004672">
    <property type="term" value="F:protein kinase activity"/>
    <property type="evidence" value="ECO:0000314"/>
    <property type="project" value="BHF-UCL"/>
</dbReference>
<dbReference type="GO" id="GO:0106310">
    <property type="term" value="F:protein serine kinase activity"/>
    <property type="evidence" value="ECO:0007669"/>
    <property type="project" value="RHEA"/>
</dbReference>
<dbReference type="GO" id="GO:0004674">
    <property type="term" value="F:protein serine/threonine kinase activity"/>
    <property type="evidence" value="ECO:0007669"/>
    <property type="project" value="UniProtKB-KW"/>
</dbReference>
<dbReference type="GO" id="GO:0097110">
    <property type="term" value="F:scaffold protein binding"/>
    <property type="evidence" value="ECO:0007669"/>
    <property type="project" value="Ensembl"/>
</dbReference>
<dbReference type="GO" id="GO:0046632">
    <property type="term" value="P:alpha-beta T cell differentiation"/>
    <property type="evidence" value="ECO:0000315"/>
    <property type="project" value="MGI"/>
</dbReference>
<dbReference type="GO" id="GO:0043369">
    <property type="term" value="P:CD4-positive or CD8-positive, alpha-beta T cell lineage commitment"/>
    <property type="evidence" value="ECO:0000315"/>
    <property type="project" value="MGI"/>
</dbReference>
<dbReference type="GO" id="GO:0043367">
    <property type="term" value="P:CD4-positive, alpha-beta T cell differentiation"/>
    <property type="evidence" value="ECO:0000315"/>
    <property type="project" value="MGI"/>
</dbReference>
<dbReference type="GO" id="GO:0030154">
    <property type="term" value="P:cell differentiation"/>
    <property type="evidence" value="ECO:0000316"/>
    <property type="project" value="MGI"/>
</dbReference>
<dbReference type="GO" id="GO:0071277">
    <property type="term" value="P:cellular response to calcium ion"/>
    <property type="evidence" value="ECO:0007669"/>
    <property type="project" value="Ensembl"/>
</dbReference>
<dbReference type="GO" id="GO:0071466">
    <property type="term" value="P:cellular response to xenobiotic stimulus"/>
    <property type="evidence" value="ECO:0000314"/>
    <property type="project" value="MGI"/>
</dbReference>
<dbReference type="GO" id="GO:0072577">
    <property type="term" value="P:endothelial cell apoptotic process"/>
    <property type="evidence" value="ECO:0000315"/>
    <property type="project" value="MGI"/>
</dbReference>
<dbReference type="GO" id="GO:0007173">
    <property type="term" value="P:epidermal growth factor receptor signaling pathway"/>
    <property type="evidence" value="ECO:0007669"/>
    <property type="project" value="Ensembl"/>
</dbReference>
<dbReference type="GO" id="GO:0070371">
    <property type="term" value="P:ERK1 and ERK2 cascade"/>
    <property type="evidence" value="ECO:0000315"/>
    <property type="project" value="MGI"/>
</dbReference>
<dbReference type="GO" id="GO:0090150">
    <property type="term" value="P:establishment of protein localization to membrane"/>
    <property type="evidence" value="ECO:0007669"/>
    <property type="project" value="Ensembl"/>
</dbReference>
<dbReference type="GO" id="GO:0060324">
    <property type="term" value="P:face development"/>
    <property type="evidence" value="ECO:0000316"/>
    <property type="project" value="MGI"/>
</dbReference>
<dbReference type="GO" id="GO:0060323">
    <property type="term" value="P:head morphogenesis"/>
    <property type="evidence" value="ECO:0000315"/>
    <property type="project" value="MGI"/>
</dbReference>
<dbReference type="GO" id="GO:0060291">
    <property type="term" value="P:long-term synaptic potentiation"/>
    <property type="evidence" value="ECO:0000315"/>
    <property type="project" value="MGI"/>
</dbReference>
<dbReference type="GO" id="GO:0002318">
    <property type="term" value="P:myeloid progenitor cell differentiation"/>
    <property type="evidence" value="ECO:0000315"/>
    <property type="project" value="MGI"/>
</dbReference>
<dbReference type="GO" id="GO:2000352">
    <property type="term" value="P:negative regulation of endothelial cell apoptotic process"/>
    <property type="evidence" value="ECO:0000315"/>
    <property type="project" value="MGI"/>
</dbReference>
<dbReference type="GO" id="GO:0010764">
    <property type="term" value="P:negative regulation of fibroblast migration"/>
    <property type="evidence" value="ECO:0000315"/>
    <property type="project" value="MGI"/>
</dbReference>
<dbReference type="GO" id="GO:0043524">
    <property type="term" value="P:negative regulation of neuron apoptotic process"/>
    <property type="evidence" value="ECO:0000315"/>
    <property type="project" value="MGI"/>
</dbReference>
<dbReference type="GO" id="GO:2000301">
    <property type="term" value="P:negative regulation of synaptic vesicle exocytosis"/>
    <property type="evidence" value="ECO:0000315"/>
    <property type="project" value="MGI"/>
</dbReference>
<dbReference type="GO" id="GO:0048680">
    <property type="term" value="P:positive regulation of axon regeneration"/>
    <property type="evidence" value="ECO:0000314"/>
    <property type="project" value="MGI"/>
</dbReference>
<dbReference type="GO" id="GO:0050772">
    <property type="term" value="P:positive regulation of axonogenesis"/>
    <property type="evidence" value="ECO:0000315"/>
    <property type="project" value="MGI"/>
</dbReference>
<dbReference type="GO" id="GO:0010828">
    <property type="term" value="P:positive regulation of D-glucose transmembrane transport"/>
    <property type="evidence" value="ECO:0007669"/>
    <property type="project" value="Ensembl"/>
</dbReference>
<dbReference type="GO" id="GO:0070374">
    <property type="term" value="P:positive regulation of ERK1 and ERK2 cascade"/>
    <property type="evidence" value="ECO:0000314"/>
    <property type="project" value="MGI"/>
</dbReference>
<dbReference type="GO" id="GO:0010628">
    <property type="term" value="P:positive regulation of gene expression"/>
    <property type="evidence" value="ECO:0000316"/>
    <property type="project" value="MGI"/>
</dbReference>
<dbReference type="GO" id="GO:0051496">
    <property type="term" value="P:positive regulation of stress fiber assembly"/>
    <property type="evidence" value="ECO:0000315"/>
    <property type="project" value="MGI"/>
</dbReference>
<dbReference type="GO" id="GO:1900026">
    <property type="term" value="P:positive regulation of substrate adhesion-dependent cell spreading"/>
    <property type="evidence" value="ECO:0000315"/>
    <property type="project" value="MGI"/>
</dbReference>
<dbReference type="GO" id="GO:0043368">
    <property type="term" value="P:positive T cell selection"/>
    <property type="evidence" value="ECO:0000315"/>
    <property type="project" value="MGI"/>
</dbReference>
<dbReference type="GO" id="GO:0099170">
    <property type="term" value="P:postsynaptic modulation of chemical synaptic transmission"/>
    <property type="evidence" value="ECO:0000314"/>
    <property type="project" value="SynGO"/>
</dbReference>
<dbReference type="GO" id="GO:0048679">
    <property type="term" value="P:regulation of axon regeneration"/>
    <property type="evidence" value="ECO:0000316"/>
    <property type="project" value="MGI"/>
</dbReference>
<dbReference type="GO" id="GO:0042127">
    <property type="term" value="P:regulation of cell population proliferation"/>
    <property type="evidence" value="ECO:0000316"/>
    <property type="project" value="MGI"/>
</dbReference>
<dbReference type="GO" id="GO:0045580">
    <property type="term" value="P:regulation of T cell differentiation"/>
    <property type="evidence" value="ECO:0000315"/>
    <property type="project" value="MGI"/>
</dbReference>
<dbReference type="GO" id="GO:0035019">
    <property type="term" value="P:somatic stem cell population maintenance"/>
    <property type="evidence" value="ECO:0000316"/>
    <property type="project" value="MGI"/>
</dbReference>
<dbReference type="GO" id="GO:0043149">
    <property type="term" value="P:stress fiber assembly"/>
    <property type="evidence" value="ECO:0000315"/>
    <property type="project" value="MGI"/>
</dbReference>
<dbReference type="GO" id="GO:0034446">
    <property type="term" value="P:substrate adhesion-dependent cell spreading"/>
    <property type="evidence" value="ECO:0000315"/>
    <property type="project" value="MGI"/>
</dbReference>
<dbReference type="GO" id="GO:0016079">
    <property type="term" value="P:synaptic vesicle exocytosis"/>
    <property type="evidence" value="ECO:0000315"/>
    <property type="project" value="MGI"/>
</dbReference>
<dbReference type="GO" id="GO:0033077">
    <property type="term" value="P:T cell differentiation in thymus"/>
    <property type="evidence" value="ECO:0000315"/>
    <property type="project" value="MGI"/>
</dbReference>
<dbReference type="GO" id="GO:0050852">
    <property type="term" value="P:T cell receptor signaling pathway"/>
    <property type="evidence" value="ECO:0000314"/>
    <property type="project" value="MGI"/>
</dbReference>
<dbReference type="GO" id="GO:0048538">
    <property type="term" value="P:thymus development"/>
    <property type="evidence" value="ECO:0000316"/>
    <property type="project" value="MGI"/>
</dbReference>
<dbReference type="GO" id="GO:0030878">
    <property type="term" value="P:thyroid gland development"/>
    <property type="evidence" value="ECO:0000316"/>
    <property type="project" value="MGI"/>
</dbReference>
<dbReference type="GO" id="GO:0008542">
    <property type="term" value="P:visual learning"/>
    <property type="evidence" value="ECO:0000315"/>
    <property type="project" value="MGI"/>
</dbReference>
<dbReference type="CDD" id="cd20871">
    <property type="entry name" value="C1_B-Raf"/>
    <property type="match status" value="1"/>
</dbReference>
<dbReference type="CDD" id="cd17134">
    <property type="entry name" value="RBD_BRAF"/>
    <property type="match status" value="1"/>
</dbReference>
<dbReference type="CDD" id="cd14062">
    <property type="entry name" value="STKc_Raf"/>
    <property type="match status" value="1"/>
</dbReference>
<dbReference type="FunFam" id="3.10.20.90:FF:000015">
    <property type="entry name" value="B-Raf proto-oncogene serine/threonine-protein kinase"/>
    <property type="match status" value="1"/>
</dbReference>
<dbReference type="FunFam" id="3.30.200.20:FF:000024">
    <property type="entry name" value="B-Raf proto-oncogene serine/threonine-protein kinase"/>
    <property type="match status" value="1"/>
</dbReference>
<dbReference type="FunFam" id="3.30.60.20:FF:000004">
    <property type="entry name" value="B-Raf proto-oncogene serine/threonine-protein kinase"/>
    <property type="match status" value="1"/>
</dbReference>
<dbReference type="FunFam" id="1.10.510.10:FF:000036">
    <property type="entry name" value="RAF proto-oncogene serine/threonine-protein kinase"/>
    <property type="match status" value="1"/>
</dbReference>
<dbReference type="Gene3D" id="3.30.60.20">
    <property type="match status" value="1"/>
</dbReference>
<dbReference type="Gene3D" id="3.10.20.90">
    <property type="entry name" value="Phosphatidylinositol 3-kinase Catalytic Subunit, Chain A, domain 1"/>
    <property type="match status" value="1"/>
</dbReference>
<dbReference type="Gene3D" id="3.30.200.20">
    <property type="entry name" value="Phosphorylase Kinase, domain 1"/>
    <property type="match status" value="1"/>
</dbReference>
<dbReference type="Gene3D" id="1.10.510.10">
    <property type="entry name" value="Transferase(Phosphotransferase) domain 1"/>
    <property type="match status" value="1"/>
</dbReference>
<dbReference type="InterPro" id="IPR046349">
    <property type="entry name" value="C1-like_sf"/>
</dbReference>
<dbReference type="InterPro" id="IPR020454">
    <property type="entry name" value="DAG/PE-bd"/>
</dbReference>
<dbReference type="InterPro" id="IPR011009">
    <property type="entry name" value="Kinase-like_dom_sf"/>
</dbReference>
<dbReference type="InterPro" id="IPR002219">
    <property type="entry name" value="PE/DAG-bd"/>
</dbReference>
<dbReference type="InterPro" id="IPR000719">
    <property type="entry name" value="Prot_kinase_dom"/>
</dbReference>
<dbReference type="InterPro" id="IPR017441">
    <property type="entry name" value="Protein_kinase_ATP_BS"/>
</dbReference>
<dbReference type="InterPro" id="IPR003116">
    <property type="entry name" value="RBD_dom"/>
</dbReference>
<dbReference type="InterPro" id="IPR001245">
    <property type="entry name" value="Ser-Thr/Tyr_kinase_cat_dom"/>
</dbReference>
<dbReference type="InterPro" id="IPR008271">
    <property type="entry name" value="Ser/Thr_kinase_AS"/>
</dbReference>
<dbReference type="InterPro" id="IPR051681">
    <property type="entry name" value="Ser/Thr_Kinases-Pseudokinases"/>
</dbReference>
<dbReference type="InterPro" id="IPR029071">
    <property type="entry name" value="Ubiquitin-like_domsf"/>
</dbReference>
<dbReference type="PANTHER" id="PTHR44329">
    <property type="entry name" value="SERINE/THREONINE-PROTEIN KINASE TNNI3K-RELATED"/>
    <property type="match status" value="1"/>
</dbReference>
<dbReference type="PANTHER" id="PTHR44329:SF240">
    <property type="entry name" value="SERINE_THREONINE-PROTEIN KINASE B-RAF"/>
    <property type="match status" value="1"/>
</dbReference>
<dbReference type="Pfam" id="PF00130">
    <property type="entry name" value="C1_1"/>
    <property type="match status" value="1"/>
</dbReference>
<dbReference type="Pfam" id="PF07714">
    <property type="entry name" value="PK_Tyr_Ser-Thr"/>
    <property type="match status" value="1"/>
</dbReference>
<dbReference type="Pfam" id="PF02196">
    <property type="entry name" value="RBD"/>
    <property type="match status" value="1"/>
</dbReference>
<dbReference type="PRINTS" id="PR00008">
    <property type="entry name" value="DAGPEDOMAIN"/>
</dbReference>
<dbReference type="SMART" id="SM00109">
    <property type="entry name" value="C1"/>
    <property type="match status" value="1"/>
</dbReference>
<dbReference type="SMART" id="SM00455">
    <property type="entry name" value="RBD"/>
    <property type="match status" value="1"/>
</dbReference>
<dbReference type="SMART" id="SM00220">
    <property type="entry name" value="S_TKc"/>
    <property type="match status" value="1"/>
</dbReference>
<dbReference type="SUPFAM" id="SSF57889">
    <property type="entry name" value="Cysteine-rich domain"/>
    <property type="match status" value="1"/>
</dbReference>
<dbReference type="SUPFAM" id="SSF56112">
    <property type="entry name" value="Protein kinase-like (PK-like)"/>
    <property type="match status" value="1"/>
</dbReference>
<dbReference type="SUPFAM" id="SSF54236">
    <property type="entry name" value="Ubiquitin-like"/>
    <property type="match status" value="1"/>
</dbReference>
<dbReference type="PROSITE" id="PS00107">
    <property type="entry name" value="PROTEIN_KINASE_ATP"/>
    <property type="match status" value="1"/>
</dbReference>
<dbReference type="PROSITE" id="PS50011">
    <property type="entry name" value="PROTEIN_KINASE_DOM"/>
    <property type="match status" value="1"/>
</dbReference>
<dbReference type="PROSITE" id="PS00108">
    <property type="entry name" value="PROTEIN_KINASE_ST"/>
    <property type="match status" value="1"/>
</dbReference>
<dbReference type="PROSITE" id="PS50898">
    <property type="entry name" value="RBD"/>
    <property type="match status" value="1"/>
</dbReference>
<dbReference type="PROSITE" id="PS00479">
    <property type="entry name" value="ZF_DAG_PE_1"/>
    <property type="match status" value="1"/>
</dbReference>
<dbReference type="PROSITE" id="PS50081">
    <property type="entry name" value="ZF_DAG_PE_2"/>
    <property type="match status" value="1"/>
</dbReference>
<comment type="function">
    <text evidence="2">Involved in the transduction of mitogenic signals from the cell membrane to the nucleus. Phosphorylates MAP2K1, and thereby activates the MAP kinase signal transduction pathway. Phosphorylates PFKFB2 (By similarity). May play a role in the postsynaptic responses of hippocampal neurons.</text>
</comment>
<comment type="catalytic activity">
    <reaction evidence="2">
        <text>L-seryl-[protein] + ATP = O-phospho-L-seryl-[protein] + ADP + H(+)</text>
        <dbReference type="Rhea" id="RHEA:17989"/>
        <dbReference type="Rhea" id="RHEA-COMP:9863"/>
        <dbReference type="Rhea" id="RHEA-COMP:11604"/>
        <dbReference type="ChEBI" id="CHEBI:15378"/>
        <dbReference type="ChEBI" id="CHEBI:29999"/>
        <dbReference type="ChEBI" id="CHEBI:30616"/>
        <dbReference type="ChEBI" id="CHEBI:83421"/>
        <dbReference type="ChEBI" id="CHEBI:456216"/>
        <dbReference type="EC" id="2.7.11.1"/>
    </reaction>
</comment>
<comment type="catalytic activity">
    <reaction evidence="2">
        <text>L-threonyl-[protein] + ATP = O-phospho-L-threonyl-[protein] + ADP + H(+)</text>
        <dbReference type="Rhea" id="RHEA:46608"/>
        <dbReference type="Rhea" id="RHEA-COMP:11060"/>
        <dbReference type="Rhea" id="RHEA-COMP:11605"/>
        <dbReference type="ChEBI" id="CHEBI:15378"/>
        <dbReference type="ChEBI" id="CHEBI:30013"/>
        <dbReference type="ChEBI" id="CHEBI:30616"/>
        <dbReference type="ChEBI" id="CHEBI:61977"/>
        <dbReference type="ChEBI" id="CHEBI:456216"/>
        <dbReference type="EC" id="2.7.11.1"/>
    </reaction>
</comment>
<comment type="cofactor">
    <cofactor evidence="9">
        <name>Zn(2+)</name>
        <dbReference type="ChEBI" id="CHEBI:29105"/>
    </cofactor>
    <text evidence="9">Binds 2 Zn(2+) ions per subunit.</text>
</comment>
<comment type="activity regulation">
    <text evidence="2">In quiescent cells, maintained in an inactive state via an intramolecular interaction between the protein kinase and N-terminal domains. Following mitogen-mediated cell activation, binds via its RGB domain to active HRAS (GTP-bound) which releases the inhibitory intramolecular interaction between the two domains. This allows the MAP2K1-mediated dimerization of KSR1 or KSR2, and BRAF which activates BRAF.</text>
</comment>
<comment type="subunit">
    <text evidence="1 2 7">Monomer (By similarity). Homodimer (By similarity). Heterodimerizes with RAF1, and the heterodimer possesses a highly increased kinase activity compared to the respective homodimers or monomers (By similarity). Heterodimerization is mitogen-regulated and enhanced by 14-3-3 proteins. MAPK1/ERK2 activation can induce a negative feedback that promotes the dissociation of the heterodimer by phosphorylating BRAF at Thr-738. Heterodimerizes (via N-terminus) with KSR1 (via N-terminus) or KSR2 (via N-terminus) in a MAP2K1-dependent manner (By similarity). Interacts with MAP2K1 and MAP2K2 (By similarity). Found in a complex with at least BRAF, HRAS, MAP2K1, MAPK3 and RGS14. Interacts with RIT1. Interacts (via N-terminus) with RGS14 (via RBD domains); the interaction mediates the formation of a ternary complex with RAF1, a ternary complex inhibited by GNAI1 (By similarity). Interacts with DGKH (By similarity). Interacts with PRMT5 (By similarity). Interacts with AKAP13, MAP2K1 and KSR1. Identified in a complex with AKAP13, KSR1 and MAP2K1 (PubMed:21102438). Interacts with FNIP1 and FNIP2 (By similarity).</text>
</comment>
<comment type="interaction">
    <interactant intactId="EBI-2584830">
        <id>P28028</id>
    </interactant>
    <interactant intactId="EBI-397757">
        <id>Q99N57</id>
        <label>Raf1</label>
    </interactant>
    <organismsDiffer>false</organismsDiffer>
    <experiments>2</experiments>
</comment>
<comment type="interaction">
    <interactant intactId="EBI-2584830">
        <id>P28028</id>
    </interactant>
    <interactant intactId="EBI-721993">
        <id>P01111</id>
        <label>NRAS</label>
    </interactant>
    <organismsDiffer>true</organismsDiffer>
    <experiments>2</experiments>
</comment>
<comment type="subcellular location">
    <subcellularLocation>
        <location evidence="1">Nucleus</location>
    </subcellularLocation>
    <subcellularLocation>
        <location evidence="1">Cytoplasm</location>
    </subcellularLocation>
    <subcellularLocation>
        <location evidence="1">Cell membrane</location>
    </subcellularLocation>
    <text evidence="1">Colocalizes with RGS14 and RAF1 in both the cytoplasm and membranes.</text>
</comment>
<comment type="alternative products">
    <event type="alternative splicing"/>
    <isoform>
        <id>P28028-3</id>
        <name>3</name>
        <sequence type="displayed"/>
    </isoform>
    <isoform>
        <id>P28028-1</id>
        <name>1</name>
        <sequence type="described" ref="VSP_060878 VSP_060879 VSP_060880"/>
    </isoform>
</comment>
<comment type="PTM">
    <text evidence="2">Phosphorylation at Ser-348 by SGK1 inhibits its activity (By similarity). Dephosphorylation of Ser-348 by the SHOC2-MRAS-PP1c (SMP) complex consisting of SHOC2, GTP-bound M-Ras/MRAS and the catalytic subunit of protein phosphatase 1 (PPP1CA, PPP1CB or PPP1CC); this relieves inactivation and stimulates kinase activity (By similarity).</text>
</comment>
<comment type="PTM">
    <text evidence="8">Methylation by PRMT5 decreases stability and kinase activity.</text>
</comment>
<comment type="PTM">
    <text evidence="1">Ubiquitinated by RNF149; which leads to proteasomal degradation. Polyubiquitinated at Lys-615 in response to EGF (By similarity).</text>
</comment>
<comment type="disease">
    <text>Participates in a chromosomal translocation that produces a Tif1a-BRAF (T18) oncogene originally isolated from a furfural-induced hepatoma.</text>
</comment>
<comment type="similarity">
    <text evidence="9">Belongs to the protein kinase superfamily. TKL Ser/Thr protein kinase family. RAF subfamily.</text>
</comment>
<comment type="sequence caution" evidence="9">
    <conflict type="miscellaneous discrepancy">
        <sequence resource="EMBL-CDS" id="AAA37320"/>
    </conflict>
    <text>Chimeric cDNA.</text>
</comment>
<proteinExistence type="evidence at protein level"/>
<evidence type="ECO:0000250" key="1"/>
<evidence type="ECO:0000250" key="2">
    <source>
        <dbReference type="UniProtKB" id="P15056"/>
    </source>
</evidence>
<evidence type="ECO:0000255" key="3">
    <source>
        <dbReference type="PROSITE-ProRule" id="PRU00159"/>
    </source>
</evidence>
<evidence type="ECO:0000255" key="4">
    <source>
        <dbReference type="PROSITE-ProRule" id="PRU00262"/>
    </source>
</evidence>
<evidence type="ECO:0000255" key="5">
    <source>
        <dbReference type="PROSITE-ProRule" id="PRU10027"/>
    </source>
</evidence>
<evidence type="ECO:0000256" key="6">
    <source>
        <dbReference type="SAM" id="MobiDB-lite"/>
    </source>
</evidence>
<evidence type="ECO:0000269" key="7">
    <source>
    </source>
</evidence>
<evidence type="ECO:0000269" key="8">
    <source>
    </source>
</evidence>
<evidence type="ECO:0000305" key="9"/>
<evidence type="ECO:0000312" key="10">
    <source>
        <dbReference type="MGI" id="MGI:88190"/>
    </source>
</evidence>
<evidence type="ECO:0007744" key="11">
    <source>
    </source>
</evidence>
<evidence type="ECO:0007744" key="12">
    <source>
    </source>
</evidence>
<accession>P28028</accession>
<accession>E9QNG9</accession>
<accession>F6SZ47</accession>
<accession>Q3USE9</accession>
<keyword id="KW-0007">Acetylation</keyword>
<keyword id="KW-0021">Allosteric enzyme</keyword>
<keyword id="KW-0025">Alternative splicing</keyword>
<keyword id="KW-0067">ATP-binding</keyword>
<keyword id="KW-1003">Cell membrane</keyword>
<keyword id="KW-0160">Chromosomal rearrangement</keyword>
<keyword id="KW-0963">Cytoplasm</keyword>
<keyword id="KW-1017">Isopeptide bond</keyword>
<keyword id="KW-0418">Kinase</keyword>
<keyword id="KW-0472">Membrane</keyword>
<keyword id="KW-0479">Metal-binding</keyword>
<keyword id="KW-0488">Methylation</keyword>
<keyword id="KW-0547">Nucleotide-binding</keyword>
<keyword id="KW-0539">Nucleus</keyword>
<keyword id="KW-0597">Phosphoprotein</keyword>
<keyword id="KW-0656">Proto-oncogene</keyword>
<keyword id="KW-1185">Reference proteome</keyword>
<keyword id="KW-0723">Serine/threonine-protein kinase</keyword>
<keyword id="KW-0808">Transferase</keyword>
<keyword id="KW-0832">Ubl conjugation</keyword>
<keyword id="KW-0862">Zinc</keyword>
<sequence>MAALSGGGGSSSGGGGGGGGGGGGGDGGGGAEQGQALFNGDMEPEAGAGAAASSAADPAIPEEVWNIKQMIKLTQEHIEALLDKFGGEHNPPSIYLEAYEEYTSKLDALQQREQQLLESLVFQTPTDASRNNPKSPQKPIVRVFLPNKQRTVVPARCGVTVRDSLKKALMMRGLIPECCAVYRIQDGEKKPIGWDTDISWLTGEELHVEVLENVPLTTHNFVRKTFFTLAFCDFCRKLLFQGFRCQTCGYKFHQRCSTEVPLMCVNYDQLDLLFVSKFFEHHPVPQEEASFPETALPSGSSSAPPSDSTGPQILTSPSPSKSIPIPQPFRPADEDHRNQFGQRDRSSSAPNVHINTIEPVNIDDLIRDQGFRGDGGSTTGLSATPPASLPGSLTNVKALQKSPGPQRERKSSSSSSSEDRSRMKTLGRRDSSDDWEIPDGQITVGQRIGSGSFGTVYKGKWHGDVAVKMLNVTAPTPQQLQAFKNEVGVLRKTRHVNILLFMGYSTKPQLAIVTQWCEGSSLYHHLHIIETKFEMIKLIDIARQTAQGMDYLHAKSIIHRDLKSNNIFLHEDLTVKIGDFGLATVKSRWSGSHQFEQLSGSILWMAPEVIRMQDKNPYSFQSDVYAFGIVLYELMTGQLPYSNINNRDQIIFMVGRGYLSPDLSKVRSNCPKAMKRLMAECLKKKRDERPLFPQILASIELLARSLPKIHRSASEPSLNRAGFQTEDFSLYACASPKTPIQAGGYGGFPVH</sequence>
<protein>
    <recommendedName>
        <fullName evidence="9">Serine/threonine-protein kinase B-raf</fullName>
        <ecNumber evidence="2">2.7.11.1</ecNumber>
    </recommendedName>
    <alternativeName>
        <fullName>Proto-oncogene B-Raf</fullName>
    </alternativeName>
</protein>
<reference key="1">
    <citation type="journal article" date="2005" name="Science">
        <title>The transcriptional landscape of the mammalian genome.</title>
        <authorList>
            <person name="Carninci P."/>
            <person name="Kasukawa T."/>
            <person name="Katayama S."/>
            <person name="Gough J."/>
            <person name="Frith M.C."/>
            <person name="Maeda N."/>
            <person name="Oyama R."/>
            <person name="Ravasi T."/>
            <person name="Lenhard B."/>
            <person name="Wells C."/>
            <person name="Kodzius R."/>
            <person name="Shimokawa K."/>
            <person name="Bajic V.B."/>
            <person name="Brenner S.E."/>
            <person name="Batalov S."/>
            <person name="Forrest A.R."/>
            <person name="Zavolan M."/>
            <person name="Davis M.J."/>
            <person name="Wilming L.G."/>
            <person name="Aidinis V."/>
            <person name="Allen J.E."/>
            <person name="Ambesi-Impiombato A."/>
            <person name="Apweiler R."/>
            <person name="Aturaliya R.N."/>
            <person name="Bailey T.L."/>
            <person name="Bansal M."/>
            <person name="Baxter L."/>
            <person name="Beisel K.W."/>
            <person name="Bersano T."/>
            <person name="Bono H."/>
            <person name="Chalk A.M."/>
            <person name="Chiu K.P."/>
            <person name="Choudhary V."/>
            <person name="Christoffels A."/>
            <person name="Clutterbuck D.R."/>
            <person name="Crowe M.L."/>
            <person name="Dalla E."/>
            <person name="Dalrymple B.P."/>
            <person name="de Bono B."/>
            <person name="Della Gatta G."/>
            <person name="di Bernardo D."/>
            <person name="Down T."/>
            <person name="Engstrom P."/>
            <person name="Fagiolini M."/>
            <person name="Faulkner G."/>
            <person name="Fletcher C.F."/>
            <person name="Fukushima T."/>
            <person name="Furuno M."/>
            <person name="Futaki S."/>
            <person name="Gariboldi M."/>
            <person name="Georgii-Hemming P."/>
            <person name="Gingeras T.R."/>
            <person name="Gojobori T."/>
            <person name="Green R.E."/>
            <person name="Gustincich S."/>
            <person name="Harbers M."/>
            <person name="Hayashi Y."/>
            <person name="Hensch T.K."/>
            <person name="Hirokawa N."/>
            <person name="Hill D."/>
            <person name="Huminiecki L."/>
            <person name="Iacono M."/>
            <person name="Ikeo K."/>
            <person name="Iwama A."/>
            <person name="Ishikawa T."/>
            <person name="Jakt M."/>
            <person name="Kanapin A."/>
            <person name="Katoh M."/>
            <person name="Kawasawa Y."/>
            <person name="Kelso J."/>
            <person name="Kitamura H."/>
            <person name="Kitano H."/>
            <person name="Kollias G."/>
            <person name="Krishnan S.P."/>
            <person name="Kruger A."/>
            <person name="Kummerfeld S.K."/>
            <person name="Kurochkin I.V."/>
            <person name="Lareau L.F."/>
            <person name="Lazarevic D."/>
            <person name="Lipovich L."/>
            <person name="Liu J."/>
            <person name="Liuni S."/>
            <person name="McWilliam S."/>
            <person name="Madan Babu M."/>
            <person name="Madera M."/>
            <person name="Marchionni L."/>
            <person name="Matsuda H."/>
            <person name="Matsuzawa S."/>
            <person name="Miki H."/>
            <person name="Mignone F."/>
            <person name="Miyake S."/>
            <person name="Morris K."/>
            <person name="Mottagui-Tabar S."/>
            <person name="Mulder N."/>
            <person name="Nakano N."/>
            <person name="Nakauchi H."/>
            <person name="Ng P."/>
            <person name="Nilsson R."/>
            <person name="Nishiguchi S."/>
            <person name="Nishikawa S."/>
            <person name="Nori F."/>
            <person name="Ohara O."/>
            <person name="Okazaki Y."/>
            <person name="Orlando V."/>
            <person name="Pang K.C."/>
            <person name="Pavan W.J."/>
            <person name="Pavesi G."/>
            <person name="Pesole G."/>
            <person name="Petrovsky N."/>
            <person name="Piazza S."/>
            <person name="Reed J."/>
            <person name="Reid J.F."/>
            <person name="Ring B.Z."/>
            <person name="Ringwald M."/>
            <person name="Rost B."/>
            <person name="Ruan Y."/>
            <person name="Salzberg S.L."/>
            <person name="Sandelin A."/>
            <person name="Schneider C."/>
            <person name="Schoenbach C."/>
            <person name="Sekiguchi K."/>
            <person name="Semple C.A."/>
            <person name="Seno S."/>
            <person name="Sessa L."/>
            <person name="Sheng Y."/>
            <person name="Shibata Y."/>
            <person name="Shimada H."/>
            <person name="Shimada K."/>
            <person name="Silva D."/>
            <person name="Sinclair B."/>
            <person name="Sperling S."/>
            <person name="Stupka E."/>
            <person name="Sugiura K."/>
            <person name="Sultana R."/>
            <person name="Takenaka Y."/>
            <person name="Taki K."/>
            <person name="Tammoja K."/>
            <person name="Tan S.L."/>
            <person name="Tang S."/>
            <person name="Taylor M.S."/>
            <person name="Tegner J."/>
            <person name="Teichmann S.A."/>
            <person name="Ueda H.R."/>
            <person name="van Nimwegen E."/>
            <person name="Verardo R."/>
            <person name="Wei C.L."/>
            <person name="Yagi K."/>
            <person name="Yamanishi H."/>
            <person name="Zabarovsky E."/>
            <person name="Zhu S."/>
            <person name="Zimmer A."/>
            <person name="Hide W."/>
            <person name="Bult C."/>
            <person name="Grimmond S.M."/>
            <person name="Teasdale R.D."/>
            <person name="Liu E.T."/>
            <person name="Brusic V."/>
            <person name="Quackenbush J."/>
            <person name="Wahlestedt C."/>
            <person name="Mattick J.S."/>
            <person name="Hume D.A."/>
            <person name="Kai C."/>
            <person name="Sasaki D."/>
            <person name="Tomaru Y."/>
            <person name="Fukuda S."/>
            <person name="Kanamori-Katayama M."/>
            <person name="Suzuki M."/>
            <person name="Aoki J."/>
            <person name="Arakawa T."/>
            <person name="Iida J."/>
            <person name="Imamura K."/>
            <person name="Itoh M."/>
            <person name="Kato T."/>
            <person name="Kawaji H."/>
            <person name="Kawagashira N."/>
            <person name="Kawashima T."/>
            <person name="Kojima M."/>
            <person name="Kondo S."/>
            <person name="Konno H."/>
            <person name="Nakano K."/>
            <person name="Ninomiya N."/>
            <person name="Nishio T."/>
            <person name="Okada M."/>
            <person name="Plessy C."/>
            <person name="Shibata K."/>
            <person name="Shiraki T."/>
            <person name="Suzuki S."/>
            <person name="Tagami M."/>
            <person name="Waki K."/>
            <person name="Watahiki A."/>
            <person name="Okamura-Oho Y."/>
            <person name="Suzuki H."/>
            <person name="Kawai J."/>
            <person name="Hayashizaki Y."/>
        </authorList>
    </citation>
    <scope>NUCLEOTIDE SEQUENCE [LARGE SCALE MRNA] (ISOFORM 1)</scope>
    <source>
        <strain>C57BL/6J</strain>
        <tissue>Medulla oblongata</tissue>
    </source>
</reference>
<reference key="2">
    <citation type="journal article" date="2009" name="PLoS Biol.">
        <title>Lineage-specific biology revealed by a finished genome assembly of the mouse.</title>
        <authorList>
            <person name="Church D.M."/>
            <person name="Goodstadt L."/>
            <person name="Hillier L.W."/>
            <person name="Zody M.C."/>
            <person name="Goldstein S."/>
            <person name="She X."/>
            <person name="Bult C.J."/>
            <person name="Agarwala R."/>
            <person name="Cherry J.L."/>
            <person name="DiCuccio M."/>
            <person name="Hlavina W."/>
            <person name="Kapustin Y."/>
            <person name="Meric P."/>
            <person name="Maglott D."/>
            <person name="Birtle Z."/>
            <person name="Marques A.C."/>
            <person name="Graves T."/>
            <person name="Zhou S."/>
            <person name="Teague B."/>
            <person name="Potamousis K."/>
            <person name="Churas C."/>
            <person name="Place M."/>
            <person name="Herschleb J."/>
            <person name="Runnheim R."/>
            <person name="Forrest D."/>
            <person name="Amos-Landgraf J."/>
            <person name="Schwartz D.C."/>
            <person name="Cheng Z."/>
            <person name="Lindblad-Toh K."/>
            <person name="Eichler E.E."/>
            <person name="Ponting C.P."/>
        </authorList>
    </citation>
    <scope>NUCLEOTIDE SEQUENCE [LARGE SCALE GENOMIC DNA]</scope>
    <source>
        <strain>C57BL/6J</strain>
    </source>
</reference>
<reference key="3">
    <citation type="journal article" date="1991" name="Proc. Natl. Acad. Sci. U.S.A.">
        <title>Development of a highly efficient expression cDNA cloning system: application to oncogene isolation.</title>
        <authorList>
            <person name="Miki T."/>
            <person name="Fleming T.P."/>
            <person name="Crescenzi M."/>
            <person name="Molloy C.J."/>
            <person name="Blam S.B."/>
            <person name="Reynolds S.H."/>
            <person name="Aaronson S.A."/>
        </authorList>
    </citation>
    <scope>NUCLEOTIDE SEQUENCE [MRNA] OF 424-751 (ISOFORM 3)</scope>
</reference>
<reference key="4">
    <citation type="journal article" date="2007" name="Proc. Natl. Acad. Sci. U.S.A.">
        <title>Large-scale phosphorylation analysis of mouse liver.</title>
        <authorList>
            <person name="Villen J."/>
            <person name="Beausoleil S.A."/>
            <person name="Gerber S.A."/>
            <person name="Gygi S.P."/>
        </authorList>
    </citation>
    <scope>PHOSPHORYLATION [LARGE SCALE ANALYSIS] AT SER-431</scope>
    <scope>IDENTIFICATION BY MASS SPECTROMETRY [LARGE SCALE ANALYSIS]</scope>
    <source>
        <tissue>Liver</tissue>
    </source>
</reference>
<reference key="5">
    <citation type="journal article" date="2010" name="Cell">
        <title>A tissue-specific atlas of mouse protein phosphorylation and expression.</title>
        <authorList>
            <person name="Huttlin E.L."/>
            <person name="Jedrychowski M.P."/>
            <person name="Elias J.E."/>
            <person name="Goswami T."/>
            <person name="Rad R."/>
            <person name="Beausoleil S.A."/>
            <person name="Villen J."/>
            <person name="Haas W."/>
            <person name="Sowa M.E."/>
            <person name="Gygi S.P."/>
        </authorList>
    </citation>
    <scope>PHOSPHORYLATION [LARGE SCALE ANALYSIS] AT SER-316; SER-348; SER-431; SER-432 AND SER-735</scope>
    <scope>IDENTIFICATION BY MASS SPECTROMETRY [LARGE SCALE ANALYSIS]</scope>
    <source>
        <tissue>Brain</tissue>
        <tissue>Brown adipose tissue</tissue>
        <tissue>Heart</tissue>
        <tissue>Kidney</tissue>
        <tissue>Liver</tissue>
        <tissue>Lung</tissue>
        <tissue>Pancreas</tissue>
        <tissue>Spleen</tissue>
        <tissue>Testis</tissue>
    </source>
</reference>
<reference key="6">
    <citation type="journal article" date="2010" name="Nat. Cell Biol.">
        <title>AKAP-Lbc enhances cyclic AMP control of the ERK1/2 cascade.</title>
        <authorList>
            <person name="Smith F.D."/>
            <person name="Langeberg L.K."/>
            <person name="Cellurale C."/>
            <person name="Pawson T."/>
            <person name="Morrison D.K."/>
            <person name="Davis R.J."/>
            <person name="Scott J.D."/>
        </authorList>
    </citation>
    <scope>INTERACTION WITH AKAP13; MAP2K1 AND KSR1</scope>
</reference>
<reference key="7">
    <citation type="journal article" date="2011" name="Sci. Signal.">
        <title>Protein arginine methyltransferase 5 regulates ERK1/2 signal transduction amplitude and cell fate through CRAF.</title>
        <authorList>
            <person name="Andreu-Perez P."/>
            <person name="Esteve-Puig R."/>
            <person name="de Torre-Minguela C."/>
            <person name="Lopez-Fauqued M."/>
            <person name="Bech-Serra J.J."/>
            <person name="Tenbaum S."/>
            <person name="Garcia-Trevijano E.R."/>
            <person name="Canals F."/>
            <person name="Merlino G."/>
            <person name="Avila M.A."/>
            <person name="Recio J.A."/>
        </authorList>
    </citation>
    <scope>METHYLATION</scope>
</reference>
<name>BRAF_MOUSE</name>
<organism>
    <name type="scientific">Mus musculus</name>
    <name type="common">Mouse</name>
    <dbReference type="NCBI Taxonomy" id="10090"/>
    <lineage>
        <taxon>Eukaryota</taxon>
        <taxon>Metazoa</taxon>
        <taxon>Chordata</taxon>
        <taxon>Craniata</taxon>
        <taxon>Vertebrata</taxon>
        <taxon>Euteleostomi</taxon>
        <taxon>Mammalia</taxon>
        <taxon>Eutheria</taxon>
        <taxon>Euarchontoglires</taxon>
        <taxon>Glires</taxon>
        <taxon>Rodentia</taxon>
        <taxon>Myomorpha</taxon>
        <taxon>Muroidea</taxon>
        <taxon>Muridae</taxon>
        <taxon>Murinae</taxon>
        <taxon>Mus</taxon>
        <taxon>Mus</taxon>
    </lineage>
</organism>
<gene>
    <name evidence="10" type="primary">Braf</name>
    <name type="synonym">B-raf</name>
</gene>
<feature type="initiator methionine" description="Removed" evidence="2">
    <location>
        <position position="1"/>
    </location>
</feature>
<feature type="chain" id="PRO_0000085666" description="Serine/threonine-protein kinase B-raf">
    <location>
        <begin position="2"/>
        <end position="751"/>
    </location>
</feature>
<feature type="domain" description="RBD" evidence="4">
    <location>
        <begin position="139"/>
        <end position="211"/>
    </location>
</feature>
<feature type="domain" description="Protein kinase" evidence="3">
    <location>
        <begin position="442"/>
        <end position="702"/>
    </location>
</feature>
<feature type="region of interest" description="Disordered" evidence="6">
    <location>
        <begin position="1"/>
        <end position="55"/>
    </location>
</feature>
<feature type="region of interest" description="Disordered" evidence="6">
    <location>
        <begin position="288"/>
        <end position="440"/>
    </location>
</feature>
<feature type="compositionally biased region" description="Gly residues" evidence="6">
    <location>
        <begin position="1"/>
        <end position="32"/>
    </location>
</feature>
<feature type="compositionally biased region" description="Low complexity" evidence="6">
    <location>
        <begin position="46"/>
        <end position="55"/>
    </location>
</feature>
<feature type="compositionally biased region" description="Low complexity" evidence="6">
    <location>
        <begin position="297"/>
        <end position="324"/>
    </location>
</feature>
<feature type="compositionally biased region" description="Basic and acidic residues" evidence="6">
    <location>
        <begin position="331"/>
        <end position="346"/>
    </location>
</feature>
<feature type="compositionally biased region" description="Basic and acidic residues" evidence="6">
    <location>
        <begin position="406"/>
        <end position="432"/>
    </location>
</feature>
<feature type="active site" description="Proton acceptor" evidence="3 5">
    <location>
        <position position="561"/>
    </location>
</feature>
<feature type="binding site" evidence="1">
    <location>
        <position position="219"/>
    </location>
    <ligand>
        <name>Zn(2+)</name>
        <dbReference type="ChEBI" id="CHEBI:29105"/>
        <label>1</label>
    </ligand>
</feature>
<feature type="binding site" evidence="1">
    <location>
        <position position="232"/>
    </location>
    <ligand>
        <name>Zn(2+)</name>
        <dbReference type="ChEBI" id="CHEBI:29105"/>
        <label>2</label>
    </ligand>
</feature>
<feature type="binding site" evidence="1">
    <location>
        <position position="235"/>
    </location>
    <ligand>
        <name>Zn(2+)</name>
        <dbReference type="ChEBI" id="CHEBI:29105"/>
        <label>2</label>
    </ligand>
</feature>
<feature type="binding site" evidence="1">
    <location>
        <position position="245"/>
    </location>
    <ligand>
        <name>Zn(2+)</name>
        <dbReference type="ChEBI" id="CHEBI:29105"/>
        <label>1</label>
    </ligand>
</feature>
<feature type="binding site" evidence="1">
    <location>
        <position position="248"/>
    </location>
    <ligand>
        <name>Zn(2+)</name>
        <dbReference type="ChEBI" id="CHEBI:29105"/>
        <label>1</label>
    </ligand>
</feature>
<feature type="binding site" evidence="1">
    <location>
        <position position="253"/>
    </location>
    <ligand>
        <name>Zn(2+)</name>
        <dbReference type="ChEBI" id="CHEBI:29105"/>
        <label>2</label>
    </ligand>
</feature>
<feature type="binding site" evidence="1">
    <location>
        <position position="256"/>
    </location>
    <ligand>
        <name>Zn(2+)</name>
        <dbReference type="ChEBI" id="CHEBI:29105"/>
        <label>2</label>
    </ligand>
</feature>
<feature type="binding site" evidence="1">
    <location>
        <position position="264"/>
    </location>
    <ligand>
        <name>Zn(2+)</name>
        <dbReference type="ChEBI" id="CHEBI:29105"/>
        <label>1</label>
    </ligand>
</feature>
<feature type="binding site" evidence="3">
    <location>
        <begin position="448"/>
        <end position="456"/>
    </location>
    <ligand>
        <name>ATP</name>
        <dbReference type="ChEBI" id="CHEBI:30616"/>
    </ligand>
</feature>
<feature type="binding site" evidence="3">
    <location>
        <position position="468"/>
    </location>
    <ligand>
        <name>ATP</name>
        <dbReference type="ChEBI" id="CHEBI:30616"/>
    </ligand>
</feature>
<feature type="modified residue" description="N-acetylalanine" evidence="2">
    <location>
        <position position="2"/>
    </location>
</feature>
<feature type="modified residue" description="Phosphoserine" evidence="2">
    <location>
        <position position="135"/>
    </location>
</feature>
<feature type="modified residue" description="Phosphoserine" evidence="12">
    <location>
        <position position="316"/>
    </location>
</feature>
<feature type="modified residue" description="Phosphoserine" evidence="12">
    <location>
        <position position="348"/>
    </location>
</feature>
<feature type="modified residue" description="Phosphothreonine; by autocatalysis" evidence="2">
    <location>
        <position position="356"/>
    </location>
</feature>
<feature type="modified residue" description="Phosphothreonine" evidence="2">
    <location>
        <position position="379"/>
    </location>
</feature>
<feature type="modified residue" description="Phosphoserine" evidence="2">
    <location>
        <position position="382"/>
    </location>
</feature>
<feature type="modified residue" description="Phosphothreonine" evidence="2">
    <location>
        <position position="384"/>
    </location>
</feature>
<feature type="modified residue" description="Phosphoserine" evidence="11 12">
    <location>
        <position position="431"/>
    </location>
</feature>
<feature type="modified residue" description="Phosphoserine" evidence="12">
    <location>
        <position position="432"/>
    </location>
</feature>
<feature type="modified residue" description="Omega-N-methylarginine; by PRMT5" evidence="2">
    <location>
        <position position="656"/>
    </location>
</feature>
<feature type="modified residue" description="Phosphoserine" evidence="2">
    <location>
        <position position="714"/>
    </location>
</feature>
<feature type="modified residue" description="Phosphoserine" evidence="12">
    <location>
        <position position="735"/>
    </location>
</feature>
<feature type="modified residue" description="Phosphothreonine; by MAPK1" evidence="2">
    <location>
        <position position="738"/>
    </location>
</feature>
<feature type="cross-link" description="Glycyl lysine isopeptide (Lys-Gly) (interchain with G-Cter in ubiquitin)" evidence="2">
    <location>
        <position position="563"/>
    </location>
</feature>
<feature type="splice variant" id="VSP_060878" description="In isoform 1.">
    <original>D</original>
    <variation>DEKFPEVELQDQR</variation>
    <location>
        <position position="363"/>
    </location>
</feature>
<feature type="splice variant" id="VSP_060879" description="In isoform 1.">
    <original>G</original>
    <variation>GAPLNQLMRCLRKYQSRTPSPLLHSVPSEIVFDFEPGPVFR</variation>
    <location>
        <position position="375"/>
    </location>
</feature>
<feature type="splice variant" id="VSP_060880" description="In isoform 1.">
    <original>GFPVH</original>
    <variation>EFAAFK</variation>
    <location>
        <begin position="747"/>
        <end position="751"/>
    </location>
</feature>
<feature type="sequence conflict" description="In Ref. 1; BAE24384." evidence="9" ref="1">
    <original>SS</original>
    <variation>RR</variation>
    <location>
        <begin position="10"/>
        <end position="11"/>
    </location>
</feature>